<comment type="function">
    <text evidence="1">May function as a substrate receptor for CUL4-DDB1 E3 ubiquitin-protein ligase complex.</text>
</comment>
<comment type="pathway">
    <text>Protein modification; protein ubiquitination.</text>
</comment>
<organism>
    <name type="scientific">Mus musculus</name>
    <name type="common">Mouse</name>
    <dbReference type="NCBI Taxonomy" id="10090"/>
    <lineage>
        <taxon>Eukaryota</taxon>
        <taxon>Metazoa</taxon>
        <taxon>Chordata</taxon>
        <taxon>Craniata</taxon>
        <taxon>Vertebrata</taxon>
        <taxon>Euteleostomi</taxon>
        <taxon>Mammalia</taxon>
        <taxon>Eutheria</taxon>
        <taxon>Euarchontoglires</taxon>
        <taxon>Glires</taxon>
        <taxon>Rodentia</taxon>
        <taxon>Myomorpha</taxon>
        <taxon>Muroidea</taxon>
        <taxon>Muridae</taxon>
        <taxon>Murinae</taxon>
        <taxon>Mus</taxon>
        <taxon>Mus</taxon>
    </lineage>
</organism>
<feature type="chain" id="PRO_0000051435" description="WD and tetratricopeptide repeats protein 1">
    <location>
        <begin position="1"/>
        <end position="677"/>
    </location>
</feature>
<feature type="repeat" description="WD 1">
    <location>
        <begin position="45"/>
        <end position="84"/>
    </location>
</feature>
<feature type="repeat" description="WD 2">
    <location>
        <begin position="88"/>
        <end position="129"/>
    </location>
</feature>
<feature type="repeat" description="WD 3">
    <location>
        <begin position="132"/>
        <end position="172"/>
    </location>
</feature>
<feature type="repeat" description="WD 4">
    <location>
        <begin position="182"/>
        <end position="222"/>
    </location>
</feature>
<feature type="repeat" description="WD 5">
    <location>
        <begin position="265"/>
        <end position="305"/>
    </location>
</feature>
<feature type="repeat" description="TPR 1">
    <location>
        <begin position="361"/>
        <end position="394"/>
    </location>
</feature>
<feature type="repeat" description="TPR 2">
    <location>
        <begin position="396"/>
        <end position="431"/>
    </location>
</feature>
<feature type="repeat" description="WD 6">
    <location>
        <begin position="535"/>
        <end position="575"/>
    </location>
</feature>
<feature type="repeat" description="WD 7">
    <location>
        <begin position="578"/>
        <end position="617"/>
    </location>
</feature>
<feature type="region of interest" description="Disordered" evidence="3">
    <location>
        <begin position="489"/>
        <end position="509"/>
    </location>
</feature>
<feature type="region of interest" description="Disordered" evidence="3">
    <location>
        <begin position="655"/>
        <end position="677"/>
    </location>
</feature>
<feature type="modified residue" description="Phosphoserine" evidence="2">
    <location>
        <position position="352"/>
    </location>
</feature>
<feature type="modified residue" description="Phosphoserine" evidence="4 5">
    <location>
        <position position="511"/>
    </location>
</feature>
<keyword id="KW-0597">Phosphoprotein</keyword>
<keyword id="KW-1185">Reference proteome</keyword>
<keyword id="KW-0677">Repeat</keyword>
<keyword id="KW-0802">TPR repeat</keyword>
<keyword id="KW-0833">Ubl conjugation pathway</keyword>
<keyword id="KW-0853">WD repeat</keyword>
<sequence>MAKVNITRDLIRRQVKERGALSFERRYHVTDPFIRRLGLEAELQGHSGCVNCLEWNEKGDLLASGSDDQHTIVWDPLHHKKLLSMHTGHTANIFSVKFLPHAGDRILITGAADSKVHVHDLTVKETIHMFGDHTNRVKRIATAPMWPNTFWSAAEDGLIRQYDLRENSKHSEVLIDLTEYCGPMVEAKCLTVNPQDNNCLAVGASGPFVRLYDIRMIHNHRKSMRQSPSAGVHTFCDRQKPLPDGAAQYYVAGHLPVKLPDYNSRLRVLVATYVTFSPNGTELLVNMGGEQVYLFDLTYKQRPYTFLLPRKCHSVEVQNGKMSTNGVSNGVSNGLHLHSNGFRLPESKGCISPQVELPPYLERVKQQANEAFACQQWTQAIQLYSQAVQKAPHNAMLYGNRAAAYMKRKWDGDHYDALRDCLKAISLNPCHLKAHFRLARCLFELKYVAEALECLDDFKGKFPEQAHSSACDALGRDITAALFSKSDGEEKKAAGGGGGPVRLRSTSRKDSISEDEMVLRERSYDYQFRYCGHCNTTTDIKEANFFGSNAQYIVSGSDDGSFFIWEKETTNLVRVLQGDESIVNCLQPHPSYCFLATSGIDPVVRLWNPRPESEDLTGRVVEDMEGASQANQRRMNANPLEAMLLDMGYRITGLSSGGAGASDDEDSAEGQVQCRPS</sequence>
<dbReference type="EMBL" id="BC048824">
    <property type="protein sequence ID" value="AAH48824.1"/>
    <property type="molecule type" value="mRNA"/>
</dbReference>
<dbReference type="EMBL" id="BC057107">
    <property type="protein sequence ID" value="AAH57107.1"/>
    <property type="molecule type" value="mRNA"/>
</dbReference>
<dbReference type="CCDS" id="CCDS18746.1"/>
<dbReference type="RefSeq" id="NP_001403455.1">
    <property type="nucleotide sequence ID" value="NM_001416526.1"/>
</dbReference>
<dbReference type="RefSeq" id="NP_001403457.1">
    <property type="nucleotide sequence ID" value="NM_001416528.1"/>
</dbReference>
<dbReference type="RefSeq" id="NP_955010.1">
    <property type="nucleotide sequence ID" value="NM_199306.4"/>
</dbReference>
<dbReference type="RefSeq" id="XP_006538806.1">
    <property type="nucleotide sequence ID" value="XM_006538743.3"/>
</dbReference>
<dbReference type="RefSeq" id="XP_006538807.1">
    <property type="nucleotide sequence ID" value="XM_006538744.3"/>
</dbReference>
<dbReference type="BioGRID" id="231030">
    <property type="interactions" value="436"/>
</dbReference>
<dbReference type="FunCoup" id="Q80ZK9">
    <property type="interactions" value="3521"/>
</dbReference>
<dbReference type="IntAct" id="Q80ZK9">
    <property type="interactions" value="1"/>
</dbReference>
<dbReference type="STRING" id="10090.ENSMUSP00000040647"/>
<dbReference type="GlyGen" id="Q80ZK9">
    <property type="glycosylation" value="2 sites, 1 N-linked glycan (1 site), 1 O-linked glycan (1 site)"/>
</dbReference>
<dbReference type="iPTMnet" id="Q80ZK9"/>
<dbReference type="PhosphoSitePlus" id="Q80ZK9"/>
<dbReference type="jPOST" id="Q80ZK9"/>
<dbReference type="PaxDb" id="10090-ENSMUSP00000040647"/>
<dbReference type="PeptideAtlas" id="Q80ZK9"/>
<dbReference type="ProteomicsDB" id="275215"/>
<dbReference type="Pumba" id="Q80ZK9"/>
<dbReference type="Antibodypedia" id="30730">
    <property type="antibodies" value="126 antibodies from 20 providers"/>
</dbReference>
<dbReference type="Ensembl" id="ENSMUST00000043305.14">
    <property type="protein sequence ID" value="ENSMUSP00000040647.8"/>
    <property type="gene ID" value="ENSMUSG00000037622.15"/>
</dbReference>
<dbReference type="GeneID" id="230796"/>
<dbReference type="KEGG" id="mmu:230796"/>
<dbReference type="UCSC" id="uc008vcr.2">
    <property type="organism name" value="mouse"/>
</dbReference>
<dbReference type="AGR" id="MGI:2685541"/>
<dbReference type="CTD" id="23038"/>
<dbReference type="MGI" id="MGI:2685541">
    <property type="gene designation" value="Wdtc1"/>
</dbReference>
<dbReference type="VEuPathDB" id="HostDB:ENSMUSG00000037622"/>
<dbReference type="eggNOG" id="KOG1310">
    <property type="taxonomic scope" value="Eukaryota"/>
</dbReference>
<dbReference type="eggNOG" id="KOG1334">
    <property type="taxonomic scope" value="Eukaryota"/>
</dbReference>
<dbReference type="GeneTree" id="ENSGT00950000182900"/>
<dbReference type="HOGENOM" id="CLU_012381_3_1_1"/>
<dbReference type="InParanoid" id="Q80ZK9"/>
<dbReference type="OMA" id="YKQRYVG"/>
<dbReference type="OrthoDB" id="4869960at2759"/>
<dbReference type="PhylomeDB" id="Q80ZK9"/>
<dbReference type="TreeFam" id="TF320710"/>
<dbReference type="Reactome" id="R-MMU-8951664">
    <property type="pathway name" value="Neddylation"/>
</dbReference>
<dbReference type="UniPathway" id="UPA00143"/>
<dbReference type="BioGRID-ORCS" id="230796">
    <property type="hits" value="2 hits in 78 CRISPR screens"/>
</dbReference>
<dbReference type="ChiTaRS" id="Wdtc1">
    <property type="organism name" value="mouse"/>
</dbReference>
<dbReference type="PRO" id="PR:Q80ZK9"/>
<dbReference type="Proteomes" id="UP000000589">
    <property type="component" value="Chromosome 4"/>
</dbReference>
<dbReference type="RNAct" id="Q80ZK9">
    <property type="molecule type" value="protein"/>
</dbReference>
<dbReference type="Bgee" id="ENSMUSG00000037622">
    <property type="expression patterns" value="Expressed in hindlimb stylopod muscle and 242 other cell types or tissues"/>
</dbReference>
<dbReference type="ExpressionAtlas" id="Q80ZK9">
    <property type="expression patterns" value="baseline and differential"/>
</dbReference>
<dbReference type="GO" id="GO:0005829">
    <property type="term" value="C:cytosol"/>
    <property type="evidence" value="ECO:0000314"/>
    <property type="project" value="MGI"/>
</dbReference>
<dbReference type="GO" id="GO:0005634">
    <property type="term" value="C:nucleus"/>
    <property type="evidence" value="ECO:0000314"/>
    <property type="project" value="MGI"/>
</dbReference>
<dbReference type="GO" id="GO:0004857">
    <property type="term" value="F:enzyme inhibitor activity"/>
    <property type="evidence" value="ECO:0000314"/>
    <property type="project" value="MGI"/>
</dbReference>
<dbReference type="GO" id="GO:0042393">
    <property type="term" value="F:histone binding"/>
    <property type="evidence" value="ECO:0000314"/>
    <property type="project" value="MGI"/>
</dbReference>
<dbReference type="GO" id="GO:0042826">
    <property type="term" value="F:histone deacetylase binding"/>
    <property type="evidence" value="ECO:0000353"/>
    <property type="project" value="MGI"/>
</dbReference>
<dbReference type="GO" id="GO:0032869">
    <property type="term" value="P:cellular response to insulin stimulus"/>
    <property type="evidence" value="ECO:0000315"/>
    <property type="project" value="MGI"/>
</dbReference>
<dbReference type="GO" id="GO:0006006">
    <property type="term" value="P:glucose metabolic process"/>
    <property type="evidence" value="ECO:0000315"/>
    <property type="project" value="MGI"/>
</dbReference>
<dbReference type="GO" id="GO:0001701">
    <property type="term" value="P:in utero embryonic development"/>
    <property type="evidence" value="ECO:0000315"/>
    <property type="project" value="MGI"/>
</dbReference>
<dbReference type="GO" id="GO:0055082">
    <property type="term" value="P:intracellular chemical homeostasis"/>
    <property type="evidence" value="ECO:0000315"/>
    <property type="project" value="MGI"/>
</dbReference>
<dbReference type="GO" id="GO:0035264">
    <property type="term" value="P:multicellular organism growth"/>
    <property type="evidence" value="ECO:0000315"/>
    <property type="project" value="MGI"/>
</dbReference>
<dbReference type="GO" id="GO:0045717">
    <property type="term" value="P:negative regulation of fatty acid biosynthetic process"/>
    <property type="evidence" value="ECO:0000314"/>
    <property type="project" value="MGI"/>
</dbReference>
<dbReference type="GO" id="GO:0000122">
    <property type="term" value="P:negative regulation of transcription by RNA polymerase II"/>
    <property type="evidence" value="ECO:0000314"/>
    <property type="project" value="MGI"/>
</dbReference>
<dbReference type="GO" id="GO:0016567">
    <property type="term" value="P:protein ubiquitination"/>
    <property type="evidence" value="ECO:0007669"/>
    <property type="project" value="UniProtKB-UniPathway"/>
</dbReference>
<dbReference type="GO" id="GO:0008361">
    <property type="term" value="P:regulation of cell size"/>
    <property type="evidence" value="ECO:0000315"/>
    <property type="project" value="MGI"/>
</dbReference>
<dbReference type="FunFam" id="1.25.40.10:FF:000079">
    <property type="entry name" value="WD and tetratricopeptide repeats protein 1"/>
    <property type="match status" value="1"/>
</dbReference>
<dbReference type="FunFam" id="2.130.10.10:FF:000201">
    <property type="entry name" value="WD and tetratricopeptide repeats protein 1"/>
    <property type="match status" value="1"/>
</dbReference>
<dbReference type="Gene3D" id="1.25.40.10">
    <property type="entry name" value="Tetratricopeptide repeat domain"/>
    <property type="match status" value="1"/>
</dbReference>
<dbReference type="Gene3D" id="2.130.10.10">
    <property type="entry name" value="YVTN repeat-like/Quinoprotein amine dehydrogenase"/>
    <property type="match status" value="2"/>
</dbReference>
<dbReference type="InterPro" id="IPR045151">
    <property type="entry name" value="DCAF8"/>
</dbReference>
<dbReference type="InterPro" id="IPR011990">
    <property type="entry name" value="TPR-like_helical_dom_sf"/>
</dbReference>
<dbReference type="InterPro" id="IPR019734">
    <property type="entry name" value="TPR_rpt"/>
</dbReference>
<dbReference type="InterPro" id="IPR015943">
    <property type="entry name" value="WD40/YVTN_repeat-like_dom_sf"/>
</dbReference>
<dbReference type="InterPro" id="IPR036322">
    <property type="entry name" value="WD40_repeat_dom_sf"/>
</dbReference>
<dbReference type="InterPro" id="IPR001680">
    <property type="entry name" value="WD40_rpt"/>
</dbReference>
<dbReference type="PANTHER" id="PTHR15574:SF40">
    <property type="entry name" value="WD AND TETRATRICOPEPTIDE REPEATS PROTEIN 1"/>
    <property type="match status" value="1"/>
</dbReference>
<dbReference type="PANTHER" id="PTHR15574">
    <property type="entry name" value="WD REPEAT DOMAIN-CONTAINING FAMILY"/>
    <property type="match status" value="1"/>
</dbReference>
<dbReference type="Pfam" id="PF00400">
    <property type="entry name" value="WD40"/>
    <property type="match status" value="4"/>
</dbReference>
<dbReference type="SMART" id="SM00028">
    <property type="entry name" value="TPR"/>
    <property type="match status" value="3"/>
</dbReference>
<dbReference type="SMART" id="SM00320">
    <property type="entry name" value="WD40"/>
    <property type="match status" value="6"/>
</dbReference>
<dbReference type="SUPFAM" id="SSF48452">
    <property type="entry name" value="TPR-like"/>
    <property type="match status" value="1"/>
</dbReference>
<dbReference type="SUPFAM" id="SSF50978">
    <property type="entry name" value="WD40 repeat-like"/>
    <property type="match status" value="1"/>
</dbReference>
<dbReference type="PROSITE" id="PS50293">
    <property type="entry name" value="TPR_REGION"/>
    <property type="match status" value="1"/>
</dbReference>
<dbReference type="PROSITE" id="PS50082">
    <property type="entry name" value="WD_REPEATS_2"/>
    <property type="match status" value="4"/>
</dbReference>
<dbReference type="PROSITE" id="PS50294">
    <property type="entry name" value="WD_REPEATS_REGION"/>
    <property type="match status" value="2"/>
</dbReference>
<gene>
    <name type="primary">Wdtc1</name>
    <name type="synonym">Gm695</name>
</gene>
<reference key="1">
    <citation type="journal article" date="2004" name="Genome Res.">
        <title>The status, quality, and expansion of the NIH full-length cDNA project: the Mammalian Gene Collection (MGC).</title>
        <authorList>
            <consortium name="The MGC Project Team"/>
        </authorList>
    </citation>
    <scope>NUCLEOTIDE SEQUENCE [LARGE SCALE MRNA]</scope>
    <source>
        <strain>FVB/N</strain>
        <tissue>Brain</tissue>
        <tissue>Salivary gland</tissue>
    </source>
</reference>
<reference key="2">
    <citation type="journal article" date="2007" name="Proc. Natl. Acad. Sci. U.S.A.">
        <title>Large-scale phosphorylation analysis of mouse liver.</title>
        <authorList>
            <person name="Villen J."/>
            <person name="Beausoleil S.A."/>
            <person name="Gerber S.A."/>
            <person name="Gygi S.P."/>
        </authorList>
    </citation>
    <scope>PHOSPHORYLATION [LARGE SCALE ANALYSIS] AT SER-511</scope>
    <scope>IDENTIFICATION BY MASS SPECTROMETRY [LARGE SCALE ANALYSIS]</scope>
    <source>
        <tissue>Liver</tissue>
    </source>
</reference>
<reference key="3">
    <citation type="journal article" date="2010" name="Cell">
        <title>A tissue-specific atlas of mouse protein phosphorylation and expression.</title>
        <authorList>
            <person name="Huttlin E.L."/>
            <person name="Jedrychowski M.P."/>
            <person name="Elias J.E."/>
            <person name="Goswami T."/>
            <person name="Rad R."/>
            <person name="Beausoleil S.A."/>
            <person name="Villen J."/>
            <person name="Haas W."/>
            <person name="Sowa M.E."/>
            <person name="Gygi S.P."/>
        </authorList>
    </citation>
    <scope>PHOSPHORYLATION [LARGE SCALE ANALYSIS] AT SER-511</scope>
    <scope>IDENTIFICATION BY MASS SPECTROMETRY [LARGE SCALE ANALYSIS]</scope>
    <source>
        <tissue>Brain</tissue>
        <tissue>Brown adipose tissue</tissue>
        <tissue>Heart</tissue>
        <tissue>Kidney</tissue>
        <tissue>Liver</tissue>
        <tissue>Lung</tissue>
        <tissue>Pancreas</tissue>
        <tissue>Spleen</tissue>
        <tissue>Testis</tissue>
    </source>
</reference>
<evidence type="ECO:0000250" key="1"/>
<evidence type="ECO:0000250" key="2">
    <source>
        <dbReference type="UniProtKB" id="Q8N5D0"/>
    </source>
</evidence>
<evidence type="ECO:0000256" key="3">
    <source>
        <dbReference type="SAM" id="MobiDB-lite"/>
    </source>
</evidence>
<evidence type="ECO:0007744" key="4">
    <source>
    </source>
</evidence>
<evidence type="ECO:0007744" key="5">
    <source>
    </source>
</evidence>
<proteinExistence type="evidence at protein level"/>
<name>WDTC1_MOUSE</name>
<protein>
    <recommendedName>
        <fullName>WD and tetratricopeptide repeats protein 1</fullName>
    </recommendedName>
</protein>
<accession>Q80ZK9</accession>